<accession>Q93WU6</accession>
<accession>Q8VWY9</accession>
<gene>
    <name type="primary">WRKY74</name>
    <name type="ordered locus">At5g28650</name>
    <name type="ORF">F4I4.30</name>
</gene>
<evidence type="ECO:0000250" key="1"/>
<evidence type="ECO:0000255" key="2">
    <source>
        <dbReference type="PROSITE-ProRule" id="PRU00223"/>
    </source>
</evidence>
<evidence type="ECO:0000305" key="3"/>
<proteinExistence type="evidence at transcript level"/>
<feature type="chain" id="PRO_0000133714" description="Probable WRKY transcription factor 74">
    <location>
        <begin position="1"/>
        <end position="330"/>
    </location>
</feature>
<feature type="DNA-binding region" description="WRKY" evidence="2">
    <location>
        <begin position="256"/>
        <end position="322"/>
    </location>
</feature>
<feature type="sequence conflict" description="In Ref. 1; AAL29432." evidence="3" ref="1">
    <original>H</original>
    <variation>R</variation>
    <location>
        <position position="16"/>
    </location>
</feature>
<reference key="1">
    <citation type="submission" date="2001-10" db="EMBL/GenBank/DDBJ databases">
        <title>Arabidopsis thaliana transcription factor WRKY74.</title>
        <authorList>
            <person name="Kushnir S."/>
            <person name="Ulker B."/>
            <person name="Somssich I.E."/>
        </authorList>
    </citation>
    <scope>NUCLEOTIDE SEQUENCE [MRNA]</scope>
    <source>
        <strain>cv. Columbia</strain>
        <tissue>Flower</tissue>
    </source>
</reference>
<reference key="2">
    <citation type="journal article" date="2000" name="Nature">
        <title>Sequence and analysis of chromosome 5 of the plant Arabidopsis thaliana.</title>
        <authorList>
            <person name="Tabata S."/>
            <person name="Kaneko T."/>
            <person name="Nakamura Y."/>
            <person name="Kotani H."/>
            <person name="Kato T."/>
            <person name="Asamizu E."/>
            <person name="Miyajima N."/>
            <person name="Sasamoto S."/>
            <person name="Kimura T."/>
            <person name="Hosouchi T."/>
            <person name="Kawashima K."/>
            <person name="Kohara M."/>
            <person name="Matsumoto M."/>
            <person name="Matsuno A."/>
            <person name="Muraki A."/>
            <person name="Nakayama S."/>
            <person name="Nakazaki N."/>
            <person name="Naruo K."/>
            <person name="Okumura S."/>
            <person name="Shinpo S."/>
            <person name="Takeuchi C."/>
            <person name="Wada T."/>
            <person name="Watanabe A."/>
            <person name="Yamada M."/>
            <person name="Yasuda M."/>
            <person name="Sato S."/>
            <person name="de la Bastide M."/>
            <person name="Huang E."/>
            <person name="Spiegel L."/>
            <person name="Gnoj L."/>
            <person name="O'Shaughnessy A."/>
            <person name="Preston R."/>
            <person name="Habermann K."/>
            <person name="Murray J."/>
            <person name="Johnson D."/>
            <person name="Rohlfing T."/>
            <person name="Nelson J."/>
            <person name="Stoneking T."/>
            <person name="Pepin K."/>
            <person name="Spieth J."/>
            <person name="Sekhon M."/>
            <person name="Armstrong J."/>
            <person name="Becker M."/>
            <person name="Belter E."/>
            <person name="Cordum H."/>
            <person name="Cordes M."/>
            <person name="Courtney L."/>
            <person name="Courtney W."/>
            <person name="Dante M."/>
            <person name="Du H."/>
            <person name="Edwards J."/>
            <person name="Fryman J."/>
            <person name="Haakensen B."/>
            <person name="Lamar E."/>
            <person name="Latreille P."/>
            <person name="Leonard S."/>
            <person name="Meyer R."/>
            <person name="Mulvaney E."/>
            <person name="Ozersky P."/>
            <person name="Riley A."/>
            <person name="Strowmatt C."/>
            <person name="Wagner-McPherson C."/>
            <person name="Wollam A."/>
            <person name="Yoakum M."/>
            <person name="Bell M."/>
            <person name="Dedhia N."/>
            <person name="Parnell L."/>
            <person name="Shah R."/>
            <person name="Rodriguez M."/>
            <person name="Hoon See L."/>
            <person name="Vil D."/>
            <person name="Baker J."/>
            <person name="Kirchoff K."/>
            <person name="Toth K."/>
            <person name="King L."/>
            <person name="Bahret A."/>
            <person name="Miller B."/>
            <person name="Marra M.A."/>
            <person name="Martienssen R."/>
            <person name="McCombie W.R."/>
            <person name="Wilson R.K."/>
            <person name="Murphy G."/>
            <person name="Bancroft I."/>
            <person name="Volckaert G."/>
            <person name="Wambutt R."/>
            <person name="Duesterhoeft A."/>
            <person name="Stiekema W."/>
            <person name="Pohl T."/>
            <person name="Entian K.-D."/>
            <person name="Terryn N."/>
            <person name="Hartley N."/>
            <person name="Bent E."/>
            <person name="Johnson S."/>
            <person name="Langham S.-A."/>
            <person name="McCullagh B."/>
            <person name="Robben J."/>
            <person name="Grymonprez B."/>
            <person name="Zimmermann W."/>
            <person name="Ramsperger U."/>
            <person name="Wedler H."/>
            <person name="Balke K."/>
            <person name="Wedler E."/>
            <person name="Peters S."/>
            <person name="van Staveren M."/>
            <person name="Dirkse W."/>
            <person name="Mooijman P."/>
            <person name="Klein Lankhorst R."/>
            <person name="Weitzenegger T."/>
            <person name="Bothe G."/>
            <person name="Rose M."/>
            <person name="Hauf J."/>
            <person name="Berneiser S."/>
            <person name="Hempel S."/>
            <person name="Feldpausch M."/>
            <person name="Lamberth S."/>
            <person name="Villarroel R."/>
            <person name="Gielen J."/>
            <person name="Ardiles W."/>
            <person name="Bents O."/>
            <person name="Lemcke K."/>
            <person name="Kolesov G."/>
            <person name="Mayer K.F.X."/>
            <person name="Rudd S."/>
            <person name="Schoof H."/>
            <person name="Schueller C."/>
            <person name="Zaccaria P."/>
            <person name="Mewes H.-W."/>
            <person name="Bevan M."/>
            <person name="Fransz P.F."/>
        </authorList>
    </citation>
    <scope>NUCLEOTIDE SEQUENCE [LARGE SCALE GENOMIC DNA]</scope>
    <source>
        <strain>cv. Columbia</strain>
    </source>
</reference>
<reference key="3">
    <citation type="journal article" date="2017" name="Plant J.">
        <title>Araport11: a complete reannotation of the Arabidopsis thaliana reference genome.</title>
        <authorList>
            <person name="Cheng C.Y."/>
            <person name="Krishnakumar V."/>
            <person name="Chan A.P."/>
            <person name="Thibaud-Nissen F."/>
            <person name="Schobel S."/>
            <person name="Town C.D."/>
        </authorList>
    </citation>
    <scope>GENOME REANNOTATION</scope>
    <source>
        <strain>cv. Columbia</strain>
    </source>
</reference>
<organism>
    <name type="scientific">Arabidopsis thaliana</name>
    <name type="common">Mouse-ear cress</name>
    <dbReference type="NCBI Taxonomy" id="3702"/>
    <lineage>
        <taxon>Eukaryota</taxon>
        <taxon>Viridiplantae</taxon>
        <taxon>Streptophyta</taxon>
        <taxon>Embryophyta</taxon>
        <taxon>Tracheophyta</taxon>
        <taxon>Spermatophyta</taxon>
        <taxon>Magnoliopsida</taxon>
        <taxon>eudicotyledons</taxon>
        <taxon>Gunneridae</taxon>
        <taxon>Pentapetalae</taxon>
        <taxon>rosids</taxon>
        <taxon>malvids</taxon>
        <taxon>Brassicales</taxon>
        <taxon>Brassicaceae</taxon>
        <taxon>Camelineae</taxon>
        <taxon>Arabidopsis</taxon>
    </lineage>
</organism>
<keyword id="KW-0238">DNA-binding</keyword>
<keyword id="KW-0539">Nucleus</keyword>
<keyword id="KW-1185">Reference proteome</keyword>
<keyword id="KW-0804">Transcription</keyword>
<keyword id="KW-0805">Transcription regulation</keyword>
<dbReference type="EMBL" id="AF426255">
    <property type="protein sequence ID" value="AAL29432.1"/>
    <property type="molecule type" value="mRNA"/>
</dbReference>
<dbReference type="EMBL" id="AF442398">
    <property type="protein sequence ID" value="AAL35291.1"/>
    <property type="molecule type" value="mRNA"/>
</dbReference>
<dbReference type="EMBL" id="AF272705">
    <property type="status" value="NOT_ANNOTATED_CDS"/>
    <property type="molecule type" value="Genomic_DNA"/>
</dbReference>
<dbReference type="EMBL" id="CP002688">
    <property type="protein sequence ID" value="AED93824.1"/>
    <property type="molecule type" value="Genomic_DNA"/>
</dbReference>
<dbReference type="RefSeq" id="NP_198217.1">
    <property type="nucleotide sequence ID" value="NM_122748.3"/>
</dbReference>
<dbReference type="SMR" id="Q93WU6"/>
<dbReference type="BioGRID" id="18244">
    <property type="interactions" value="1"/>
</dbReference>
<dbReference type="FunCoup" id="Q93WU6">
    <property type="interactions" value="1"/>
</dbReference>
<dbReference type="MINT" id="Q93WU6"/>
<dbReference type="STRING" id="3702.Q93WU6"/>
<dbReference type="PaxDb" id="3702-AT5G28650.1"/>
<dbReference type="EnsemblPlants" id="AT5G28650.1">
    <property type="protein sequence ID" value="AT5G28650.1"/>
    <property type="gene ID" value="AT5G28650"/>
</dbReference>
<dbReference type="GeneID" id="832971"/>
<dbReference type="Gramene" id="AT5G28650.1">
    <property type="protein sequence ID" value="AT5G28650.1"/>
    <property type="gene ID" value="AT5G28650"/>
</dbReference>
<dbReference type="KEGG" id="ath:AT5G28650"/>
<dbReference type="Araport" id="AT5G28650"/>
<dbReference type="TAIR" id="AT5G28650">
    <property type="gene designation" value="WRKY74"/>
</dbReference>
<dbReference type="eggNOG" id="ENOG502QPQX">
    <property type="taxonomic scope" value="Eukaryota"/>
</dbReference>
<dbReference type="HOGENOM" id="CLU_040478_0_0_1"/>
<dbReference type="InParanoid" id="Q93WU6"/>
<dbReference type="OMA" id="SKSIMVE"/>
<dbReference type="PRO" id="PR:Q93WU6"/>
<dbReference type="Proteomes" id="UP000006548">
    <property type="component" value="Chromosome 5"/>
</dbReference>
<dbReference type="ExpressionAtlas" id="Q93WU6">
    <property type="expression patterns" value="baseline and differential"/>
</dbReference>
<dbReference type="GO" id="GO:0005634">
    <property type="term" value="C:nucleus"/>
    <property type="evidence" value="ECO:0000305"/>
    <property type="project" value="TAIR"/>
</dbReference>
<dbReference type="GO" id="GO:0005516">
    <property type="term" value="F:calmodulin binding"/>
    <property type="evidence" value="ECO:0000314"/>
    <property type="project" value="TAIR"/>
</dbReference>
<dbReference type="GO" id="GO:0003700">
    <property type="term" value="F:DNA-binding transcription factor activity"/>
    <property type="evidence" value="ECO:0000250"/>
    <property type="project" value="TAIR"/>
</dbReference>
<dbReference type="GO" id="GO:0043565">
    <property type="term" value="F:sequence-specific DNA binding"/>
    <property type="evidence" value="ECO:0007669"/>
    <property type="project" value="InterPro"/>
</dbReference>
<dbReference type="FunFam" id="2.20.25.80:FF:000004">
    <property type="entry name" value="WRKY transcription factor 65"/>
    <property type="match status" value="1"/>
</dbReference>
<dbReference type="Gene3D" id="2.20.25.80">
    <property type="entry name" value="WRKY domain"/>
    <property type="match status" value="1"/>
</dbReference>
<dbReference type="InterPro" id="IPR003657">
    <property type="entry name" value="WRKY_dom"/>
</dbReference>
<dbReference type="InterPro" id="IPR036576">
    <property type="entry name" value="WRKY_dom_sf"/>
</dbReference>
<dbReference type="InterPro" id="IPR044810">
    <property type="entry name" value="WRKY_plant"/>
</dbReference>
<dbReference type="InterPro" id="IPR018872">
    <property type="entry name" value="Zn-cluster-dom"/>
</dbReference>
<dbReference type="PANTHER" id="PTHR31282">
    <property type="entry name" value="WRKY TRANSCRIPTION FACTOR 21-RELATED"/>
    <property type="match status" value="1"/>
</dbReference>
<dbReference type="Pfam" id="PF10533">
    <property type="entry name" value="Plant_zn_clust"/>
    <property type="match status" value="1"/>
</dbReference>
<dbReference type="Pfam" id="PF03106">
    <property type="entry name" value="WRKY"/>
    <property type="match status" value="1"/>
</dbReference>
<dbReference type="SMART" id="SM00774">
    <property type="entry name" value="WRKY"/>
    <property type="match status" value="1"/>
</dbReference>
<dbReference type="SUPFAM" id="SSF118290">
    <property type="entry name" value="WRKY DNA-binding domain"/>
    <property type="match status" value="1"/>
</dbReference>
<dbReference type="PROSITE" id="PS50811">
    <property type="entry name" value="WRKY"/>
    <property type="match status" value="1"/>
</dbReference>
<comment type="function">
    <text evidence="1">Transcription factor. Interacts specifically with the W box (5'-(T)TGAC[CT]-3'), a frequently occurring elicitor-responsive cis-acting element (By similarity).</text>
</comment>
<comment type="subcellular location">
    <subcellularLocation>
        <location evidence="3">Nucleus</location>
    </subcellularLocation>
</comment>
<protein>
    <recommendedName>
        <fullName>Probable WRKY transcription factor 74</fullName>
    </recommendedName>
    <alternativeName>
        <fullName>WRKY DNA-binding protein 74</fullName>
    </alternativeName>
</protein>
<name>WRK74_ARATH</name>
<sequence length="330" mass="36495">MEEVEAANKAAVESCHGVLNLLSQQTNDSKSIMVETREAVCKFKRVSSLLSRGLGQRKIKKLNNNNYKFSSSLLPQHMFLESPVCSNNAISGCIPILAPKPLQIVPAGPPPLMLFNQNMCLDKSFLELKPPSSRAVDPKPYQFIHTHQQGVYSRSKSGLNLKFDGSIGASCYSPSISNGSRSFVSSLSMDGSVTDYDRNSFHLIGLPQGSDHISQHSRRTSCSGSLKCGSKSKCHCSKKRKLRVKRSIKVPAISNKIADIPPDEYSWRKYGQKPIKGSPHPRGYYKCSSVRGCPARKHVERCVEETSMLIVTYEGEHNHSRILSSQSAHT</sequence>